<protein>
    <recommendedName>
        <fullName evidence="1">Putative glutamate--cysteine ligase 2-2</fullName>
        <ecNumber evidence="1">6.3.2.2</ecNumber>
    </recommendedName>
    <alternativeName>
        <fullName evidence="1">Gamma-glutamylcysteine synthetase 2-2</fullName>
        <shortName evidence="1">GCS 2-2</shortName>
        <shortName evidence="1">Gamma-GCS 2-2</shortName>
    </alternativeName>
</protein>
<keyword id="KW-0067">ATP-binding</keyword>
<keyword id="KW-0436">Ligase</keyword>
<keyword id="KW-0547">Nucleotide-binding</keyword>
<keyword id="KW-1185">Reference proteome</keyword>
<feature type="chain" id="PRO_0000291513" description="Putative glutamate--cysteine ligase 2-2">
    <location>
        <begin position="1"/>
        <end position="384"/>
    </location>
</feature>
<organism>
    <name type="scientific">Rubrobacter xylanophilus (strain DSM 9941 / JCM 11954 / NBRC 16129 / PRD-1)</name>
    <dbReference type="NCBI Taxonomy" id="266117"/>
    <lineage>
        <taxon>Bacteria</taxon>
        <taxon>Bacillati</taxon>
        <taxon>Actinomycetota</taxon>
        <taxon>Rubrobacteria</taxon>
        <taxon>Rubrobacterales</taxon>
        <taxon>Rubrobacteraceae</taxon>
        <taxon>Rubrobacter</taxon>
    </lineage>
</organism>
<evidence type="ECO:0000255" key="1">
    <source>
        <dbReference type="HAMAP-Rule" id="MF_01609"/>
    </source>
</evidence>
<comment type="function">
    <text evidence="1">ATP-dependent carboxylate-amine ligase which exhibits weak glutamate--cysteine ligase activity.</text>
</comment>
<comment type="catalytic activity">
    <reaction evidence="1">
        <text>L-cysteine + L-glutamate + ATP = gamma-L-glutamyl-L-cysteine + ADP + phosphate + H(+)</text>
        <dbReference type="Rhea" id="RHEA:13285"/>
        <dbReference type="ChEBI" id="CHEBI:15378"/>
        <dbReference type="ChEBI" id="CHEBI:29985"/>
        <dbReference type="ChEBI" id="CHEBI:30616"/>
        <dbReference type="ChEBI" id="CHEBI:35235"/>
        <dbReference type="ChEBI" id="CHEBI:43474"/>
        <dbReference type="ChEBI" id="CHEBI:58173"/>
        <dbReference type="ChEBI" id="CHEBI:456216"/>
        <dbReference type="EC" id="6.3.2.2"/>
    </reaction>
</comment>
<comment type="similarity">
    <text evidence="1">Belongs to the glutamate--cysteine ligase type 2 family. YbdK subfamily.</text>
</comment>
<reference key="1">
    <citation type="submission" date="2006-06" db="EMBL/GenBank/DDBJ databases">
        <title>Complete sequence of Rubrobacter xylanophilus DSM 9941.</title>
        <authorList>
            <consortium name="US DOE Joint Genome Institute"/>
            <person name="Copeland A."/>
            <person name="Lucas S."/>
            <person name="Lapidus A."/>
            <person name="Barry K."/>
            <person name="Detter J.C."/>
            <person name="Glavina del Rio T."/>
            <person name="Hammon N."/>
            <person name="Israni S."/>
            <person name="Dalin E."/>
            <person name="Tice H."/>
            <person name="Pitluck S."/>
            <person name="Munk A.C."/>
            <person name="Brettin T."/>
            <person name="Bruce D."/>
            <person name="Han C."/>
            <person name="Tapia R."/>
            <person name="Gilna P."/>
            <person name="Schmutz J."/>
            <person name="Larimer F."/>
            <person name="Land M."/>
            <person name="Hauser L."/>
            <person name="Kyrpides N."/>
            <person name="Lykidis A."/>
            <person name="da Costa M.S."/>
            <person name="Rainey F.A."/>
            <person name="Empadinhas N."/>
            <person name="Jolivet E."/>
            <person name="Battista J.R."/>
            <person name="Richardson P."/>
        </authorList>
    </citation>
    <scope>NUCLEOTIDE SEQUENCE [LARGE SCALE GENOMIC DNA]</scope>
    <source>
        <strain>DSM 9941 / JCM 11954 / NBRC 16129 / PRD-1</strain>
    </source>
</reference>
<name>GCS22_RUBXD</name>
<sequence>MVMDAGKKREAGALLPEEAFETGAPEGTLGAEEELWLADPETLKLAGGAQKILAAEPAEHFSGELIDCEVEANTGVHREAAGVARDLLARRRTLLEHAGRLGRVLGTSGTHPLGDWREQEIIDKPHYQYLKRKLGWLIRRNNTFSLHVHYAVQGKEKVIYLFDRIREYVPHFLAVSVNSPFWQGEFTDTRSARALVFSRSLPHAGMPEAFGSWSAYAGYLDFVGRPGVIRRLGEIWWDIRPHPRLSTLEIRAFDAQTDPARSEALISLAAATCDMLCAEYESGELRPARPVREIEDNKWSAQRHGLDGLFVDHETHEPVPARWAVERLAELAASSSRRDLSSLERLLEEPTESERQLLVWRETGSVKEVARDIARRTRAAIPAT</sequence>
<dbReference type="EC" id="6.3.2.2" evidence="1"/>
<dbReference type="EMBL" id="CP000386">
    <property type="protein sequence ID" value="ABG04093.1"/>
    <property type="molecule type" value="Genomic_DNA"/>
</dbReference>
<dbReference type="SMR" id="Q1AWY5"/>
<dbReference type="STRING" id="266117.Rxyl_1127"/>
<dbReference type="KEGG" id="rxy:Rxyl_1127"/>
<dbReference type="eggNOG" id="COG2170">
    <property type="taxonomic scope" value="Bacteria"/>
</dbReference>
<dbReference type="HOGENOM" id="CLU_044848_1_0_11"/>
<dbReference type="PhylomeDB" id="Q1AWY5"/>
<dbReference type="Proteomes" id="UP000006637">
    <property type="component" value="Chromosome"/>
</dbReference>
<dbReference type="GO" id="GO:0005524">
    <property type="term" value="F:ATP binding"/>
    <property type="evidence" value="ECO:0007669"/>
    <property type="project" value="UniProtKB-KW"/>
</dbReference>
<dbReference type="GO" id="GO:0004357">
    <property type="term" value="F:glutamate-cysteine ligase activity"/>
    <property type="evidence" value="ECO:0007669"/>
    <property type="project" value="UniProtKB-EC"/>
</dbReference>
<dbReference type="GO" id="GO:0042398">
    <property type="term" value="P:modified amino acid biosynthetic process"/>
    <property type="evidence" value="ECO:0007669"/>
    <property type="project" value="InterPro"/>
</dbReference>
<dbReference type="Gene3D" id="3.30.590.20">
    <property type="match status" value="1"/>
</dbReference>
<dbReference type="HAMAP" id="MF_01609">
    <property type="entry name" value="Glu_cys_ligase_2"/>
    <property type="match status" value="1"/>
</dbReference>
<dbReference type="InterPro" id="IPR050141">
    <property type="entry name" value="GCL_type2/YbdK_subfam"/>
</dbReference>
<dbReference type="InterPro" id="IPR006336">
    <property type="entry name" value="GCS2"/>
</dbReference>
<dbReference type="InterPro" id="IPR014746">
    <property type="entry name" value="Gln_synth/guanido_kin_cat_dom"/>
</dbReference>
<dbReference type="InterPro" id="IPR011793">
    <property type="entry name" value="YbdK"/>
</dbReference>
<dbReference type="NCBIfam" id="TIGR02050">
    <property type="entry name" value="gshA_cyan_rel"/>
    <property type="match status" value="1"/>
</dbReference>
<dbReference type="PANTHER" id="PTHR36510">
    <property type="entry name" value="GLUTAMATE--CYSTEINE LIGASE 2-RELATED"/>
    <property type="match status" value="1"/>
</dbReference>
<dbReference type="PANTHER" id="PTHR36510:SF1">
    <property type="entry name" value="GLUTAMATE--CYSTEINE LIGASE 2-RELATED"/>
    <property type="match status" value="1"/>
</dbReference>
<dbReference type="Pfam" id="PF04107">
    <property type="entry name" value="GCS2"/>
    <property type="match status" value="1"/>
</dbReference>
<dbReference type="SUPFAM" id="SSF55931">
    <property type="entry name" value="Glutamine synthetase/guanido kinase"/>
    <property type="match status" value="1"/>
</dbReference>
<gene>
    <name type="ordered locus">Rxyl_1127</name>
</gene>
<proteinExistence type="inferred from homology"/>
<accession>Q1AWY5</accession>